<organism>
    <name type="scientific">Escherichia coli (strain K12)</name>
    <dbReference type="NCBI Taxonomy" id="83333"/>
    <lineage>
        <taxon>Bacteria</taxon>
        <taxon>Pseudomonadati</taxon>
        <taxon>Pseudomonadota</taxon>
        <taxon>Gammaproteobacteria</taxon>
        <taxon>Enterobacterales</taxon>
        <taxon>Enterobacteriaceae</taxon>
        <taxon>Escherichia</taxon>
    </lineage>
</organism>
<keyword id="KW-0998">Cell outer membrane</keyword>
<keyword id="KW-0406">Ion transport</keyword>
<keyword id="KW-0472">Membrane</keyword>
<keyword id="KW-0626">Porin</keyword>
<keyword id="KW-1185">Reference proteome</keyword>
<keyword id="KW-0732">Signal</keyword>
<keyword id="KW-0812">Transmembrane</keyword>
<keyword id="KW-1134">Transmembrane beta strand</keyword>
<keyword id="KW-0813">Transport</keyword>
<proteinExistence type="uncertain"/>
<feature type="signal peptide" evidence="2">
    <location>
        <begin position="1"/>
        <end position="23"/>
    </location>
</feature>
<feature type="chain" id="PRO_0000025248" description="Putative outer membrane porin protein NmpC">
    <location>
        <begin position="24"/>
        <end position="365"/>
    </location>
</feature>
<feature type="sequence conflict" description="In Ref. 1; AAA23728." evidence="3" ref="1">
    <original>N</original>
    <variation>K</variation>
    <location>
        <position position="326"/>
    </location>
</feature>
<sequence length="365" mass="40302">MKKLTVAISAVAASVLMAMSAQAAEIYNKDSNKLDLYGKVNAKHYFSSNDADDGDTTYARLGFKGETQINDQLTGFGQWEYEFKGNRAESQGSSKDKTRLAFAGLKFGDYGSIDYGRNYGVAYDIGAWTDVLPEFGGDTWTQTDVFMTQRATGVATYRNNDFFGLVDGLNFAAQYQGKNDRSDFDNYTEGNGDGFGFSATYEYEGFGIGATYAKSDRTDTQVNAGKVLPEVFASGKNAEVWAAGLKYDANNIYLATTYSETQNMTVFADHFVANKAQNFEAVAQYQFDFGLRPSVAYLQSKGKDLGVWGDQDLVKYVDVGATYYFNKNMSTFVDYKINLLDKNDFTKALGVSTDDIVAVGLVYQF</sequence>
<evidence type="ECO:0000250" key="1"/>
<evidence type="ECO:0000255" key="2"/>
<evidence type="ECO:0000305" key="3"/>
<comment type="subunit">
    <text evidence="1">Homotrimer.</text>
</comment>
<comment type="subcellular location">
    <subcellularLocation>
        <location>Cell outer membrane</location>
        <topology>Multi-pass membrane protein</topology>
    </subcellularLocation>
    <text>When expressed in mutant CS384.</text>
</comment>
<comment type="miscellaneous">
    <text>Encoded by the cryptic lambdoid prophage DLP12.</text>
</comment>
<comment type="similarity">
    <text evidence="3">Belongs to the Gram-negative porin family.</text>
</comment>
<comment type="caution">
    <text evidence="3">Could be the product of a pseudogene, as in E.coli K12 the nmpC open reading frame is interrupted by an IS5 insertion and generates a hybrid open reading frame that is not expressed. In strains which have undergone selection for suppressors of ompB mutations (for example, mutant strain CS384) nmpC is expressed.</text>
</comment>
<protein>
    <recommendedName>
        <fullName>Putative outer membrane porin protein NmpC</fullName>
    </recommendedName>
</protein>
<reference key="1">
    <citation type="journal article" date="1986" name="J. Biol. Chem.">
        <title>Structure of the lc and nmpC outer membrane porin protein genes of lambdoid bacteriophage.</title>
        <authorList>
            <person name="Blasband A.J."/>
            <person name="Marcotte W.R. Jr."/>
            <person name="Schnaitman C.A."/>
        </authorList>
    </citation>
    <scope>NUCLEOTIDE SEQUENCE [GENOMIC DNA]</scope>
    <source>
        <strain>Mutant CS384</strain>
    </source>
</reference>
<reference key="2">
    <citation type="submission" date="1997-01" db="EMBL/GenBank/DDBJ databases">
        <title>Sequence of minutes 4-25 of Escherichia coli.</title>
        <authorList>
            <person name="Chung E."/>
            <person name="Allen E."/>
            <person name="Araujo R."/>
            <person name="Aparicio A.M."/>
            <person name="Davis K."/>
            <person name="Duncan M."/>
            <person name="Federspiel N."/>
            <person name="Hyman R."/>
            <person name="Kalman S."/>
            <person name="Komp C."/>
            <person name="Kurdi O."/>
            <person name="Lew H."/>
            <person name="Lin D."/>
            <person name="Namath A."/>
            <person name="Oefner P."/>
            <person name="Roberts D."/>
            <person name="Schramm S."/>
            <person name="Davis R.W."/>
        </authorList>
    </citation>
    <scope>NUCLEOTIDE SEQUENCE [LARGE SCALE GENOMIC DNA]</scope>
    <source>
        <strain>K12 / MG1655 / ATCC 47076</strain>
    </source>
</reference>
<reference key="3">
    <citation type="journal article" date="1997" name="Science">
        <title>The complete genome sequence of Escherichia coli K-12.</title>
        <authorList>
            <person name="Blattner F.R."/>
            <person name="Plunkett G. III"/>
            <person name="Bloch C.A."/>
            <person name="Perna N.T."/>
            <person name="Burland V."/>
            <person name="Riley M."/>
            <person name="Collado-Vides J."/>
            <person name="Glasner J.D."/>
            <person name="Rode C.K."/>
            <person name="Mayhew G.F."/>
            <person name="Gregor J."/>
            <person name="Davis N.W."/>
            <person name="Kirkpatrick H.A."/>
            <person name="Goeden M.A."/>
            <person name="Rose D.J."/>
            <person name="Mau B."/>
            <person name="Shao Y."/>
        </authorList>
    </citation>
    <scope>NUCLEOTIDE SEQUENCE [LARGE SCALE GENOMIC DNA]</scope>
    <source>
        <strain>K12 / MG1655 / ATCC 47076</strain>
    </source>
</reference>
<reference key="4">
    <citation type="journal article" date="1994" name="Mol. Microbiol.">
        <title>Expression of the nmpC gene of Escherichia coli K-12 is modulated by external pH. Identification of cis-acting regulatory sequences involved in this regulation.</title>
        <authorList>
            <person name="Coll J.L."/>
            <person name="Heyde M."/>
            <person name="Portalier R."/>
        </authorList>
    </citation>
    <scope>NUCLEOTIDE SEQUENCE [GENOMIC DNA] OF 1-17</scope>
    <source>
        <strain>JL5502</strain>
    </source>
</reference>
<reference key="5">
    <citation type="journal article" date="1996" name="J. Mol. Biol.">
        <title>Holliday junction resolvases encoded by homologous rusA genes in Escherichia coli K-12 and phage 82.</title>
        <authorList>
            <person name="Mahdi A.A."/>
            <person name="Sharples G.J."/>
            <person name="Mandal T.N."/>
            <person name="Lloyd R.G."/>
        </authorList>
    </citation>
    <scope>NUCLEOTIDE SEQUENCE [GENOMIC DNA] OF 347-365</scope>
    <source>
        <strain>K12</strain>
    </source>
</reference>
<dbReference type="EMBL" id="M13457">
    <property type="protein sequence ID" value="AAA23728.1"/>
    <property type="status" value="ALT_SEQ"/>
    <property type="molecule type" value="Genomic_DNA"/>
</dbReference>
<dbReference type="EMBL" id="U82598">
    <property type="protein sequence ID" value="AAB40749.1"/>
    <property type="status" value="ALT_SEQ"/>
    <property type="molecule type" value="Genomic_DNA"/>
</dbReference>
<dbReference type="EMBL" id="U00096">
    <property type="status" value="NOT_ANNOTATED_CDS"/>
    <property type="molecule type" value="Genomic_DNA"/>
</dbReference>
<dbReference type="EMBL" id="Z35442">
    <property type="protein sequence ID" value="CAA84594.1"/>
    <property type="molecule type" value="Genomic_DNA"/>
</dbReference>
<dbReference type="EMBL" id="X92587">
    <property type="protein sequence ID" value="CAA63325.1"/>
    <property type="molecule type" value="Genomic_DNA"/>
</dbReference>
<dbReference type="PIR" id="A25647">
    <property type="entry name" value="MMECNC"/>
</dbReference>
<dbReference type="SMR" id="P21420"/>
<dbReference type="FunCoup" id="P21420">
    <property type="interactions" value="33"/>
</dbReference>
<dbReference type="IntAct" id="P21420">
    <property type="interactions" value="1"/>
</dbReference>
<dbReference type="MINT" id="P21420"/>
<dbReference type="TCDB" id="1.B.1.1.4">
    <property type="family name" value="the general bacterial porin (gbp) family"/>
</dbReference>
<dbReference type="EchoBASE" id="EB0653"/>
<dbReference type="InParanoid" id="P21420"/>
<dbReference type="PhylomeDB" id="P21420"/>
<dbReference type="Proteomes" id="UP000000625">
    <property type="component" value="Chromosome"/>
</dbReference>
<dbReference type="GO" id="GO:0009279">
    <property type="term" value="C:cell outer membrane"/>
    <property type="evidence" value="ECO:0007669"/>
    <property type="project" value="UniProtKB-SubCell"/>
</dbReference>
<dbReference type="GO" id="GO:0046930">
    <property type="term" value="C:pore complex"/>
    <property type="evidence" value="ECO:0000318"/>
    <property type="project" value="GO_Central"/>
</dbReference>
<dbReference type="GO" id="GO:0015288">
    <property type="term" value="F:porin activity"/>
    <property type="evidence" value="ECO:0000318"/>
    <property type="project" value="GO_Central"/>
</dbReference>
<dbReference type="GO" id="GO:0034220">
    <property type="term" value="P:monoatomic ion transmembrane transport"/>
    <property type="evidence" value="ECO:0007669"/>
    <property type="project" value="InterPro"/>
</dbReference>
<dbReference type="CDD" id="cd00342">
    <property type="entry name" value="gram_neg_porins"/>
    <property type="match status" value="1"/>
</dbReference>
<dbReference type="Gene3D" id="2.40.160.10">
    <property type="entry name" value="Porin"/>
    <property type="match status" value="1"/>
</dbReference>
<dbReference type="InterPro" id="IPR050298">
    <property type="entry name" value="Gram-neg_bact_OMP"/>
</dbReference>
<dbReference type="InterPro" id="IPR033900">
    <property type="entry name" value="Gram_neg_porin_domain"/>
</dbReference>
<dbReference type="InterPro" id="IPR023614">
    <property type="entry name" value="Porin_dom_sf"/>
</dbReference>
<dbReference type="InterPro" id="IPR001897">
    <property type="entry name" value="Porin_gammaproteobac"/>
</dbReference>
<dbReference type="InterPro" id="IPR001702">
    <property type="entry name" value="Porin_Gram-ve"/>
</dbReference>
<dbReference type="InterPro" id="IPR013793">
    <property type="entry name" value="Porin_Gram-ve_CS"/>
</dbReference>
<dbReference type="NCBIfam" id="NF007841">
    <property type="entry name" value="PRK10554.1"/>
    <property type="match status" value="1"/>
</dbReference>
<dbReference type="PANTHER" id="PTHR34501:SF2">
    <property type="entry name" value="OUTER MEMBRANE PORIN F-RELATED"/>
    <property type="match status" value="1"/>
</dbReference>
<dbReference type="PANTHER" id="PTHR34501">
    <property type="entry name" value="PROTEIN YDDL-RELATED"/>
    <property type="match status" value="1"/>
</dbReference>
<dbReference type="Pfam" id="PF00267">
    <property type="entry name" value="Porin_1"/>
    <property type="match status" value="1"/>
</dbReference>
<dbReference type="PRINTS" id="PR00183">
    <property type="entry name" value="ECOLIPORIN"/>
</dbReference>
<dbReference type="PRINTS" id="PR00182">
    <property type="entry name" value="ECOLNEIPORIN"/>
</dbReference>
<dbReference type="SUPFAM" id="SSF56935">
    <property type="entry name" value="Porins"/>
    <property type="match status" value="1"/>
</dbReference>
<dbReference type="PROSITE" id="PS00576">
    <property type="entry name" value="GRAM_NEG_PORIN"/>
    <property type="match status" value="1"/>
</dbReference>
<gene>
    <name type="primary">nmpC</name>
    <name type="synonym">phmA</name>
    <name type="ordered locus">b0553</name>
</gene>
<accession>P21420</accession>
<accession>P77189</accession>
<name>NMPC_ECOLI</name>